<dbReference type="EC" id="3.1.1.-" evidence="1"/>
<dbReference type="EMBL" id="AL123456">
    <property type="protein sequence ID" value="CCP45774.1"/>
    <property type="molecule type" value="Genomic_DNA"/>
</dbReference>
<dbReference type="RefSeq" id="NP_217486.1">
    <property type="nucleotide sequence ID" value="NC_000962.3"/>
</dbReference>
<dbReference type="RefSeq" id="WP_003415015.1">
    <property type="nucleotide sequence ID" value="NZ_NVQJ01000015.1"/>
</dbReference>
<dbReference type="SMR" id="P95125"/>
<dbReference type="FunCoup" id="P95125">
    <property type="interactions" value="36"/>
</dbReference>
<dbReference type="STRING" id="83332.Rv2970c"/>
<dbReference type="ChEMBL" id="CHEMBL4105751"/>
<dbReference type="SwissLipids" id="SLP:000001337"/>
<dbReference type="ESTHER" id="myctu-Rv2970c">
    <property type="family name" value="Hormone-sensitive_lipase_like"/>
</dbReference>
<dbReference type="PaxDb" id="83332-Rv2970c"/>
<dbReference type="DNASU" id="887194"/>
<dbReference type="GeneID" id="45426959"/>
<dbReference type="GeneID" id="887194"/>
<dbReference type="KEGG" id="mtu:Rv2970c"/>
<dbReference type="KEGG" id="mtv:RVBD_2970c"/>
<dbReference type="PATRIC" id="fig|83332.111.peg.3309"/>
<dbReference type="TubercuList" id="Rv2970c"/>
<dbReference type="eggNOG" id="COG0657">
    <property type="taxonomic scope" value="Bacteria"/>
</dbReference>
<dbReference type="InParanoid" id="P95125"/>
<dbReference type="OrthoDB" id="3181909at2"/>
<dbReference type="PhylomeDB" id="P95125"/>
<dbReference type="Proteomes" id="UP000001584">
    <property type="component" value="Chromosome"/>
</dbReference>
<dbReference type="GO" id="GO:0005737">
    <property type="term" value="C:cytoplasm"/>
    <property type="evidence" value="ECO:0007669"/>
    <property type="project" value="UniProtKB-SubCell"/>
</dbReference>
<dbReference type="GO" id="GO:0005886">
    <property type="term" value="C:plasma membrane"/>
    <property type="evidence" value="ECO:0007005"/>
    <property type="project" value="MTBBASE"/>
</dbReference>
<dbReference type="GO" id="GO:0008126">
    <property type="term" value="F:acetylesterase activity"/>
    <property type="evidence" value="ECO:0007669"/>
    <property type="project" value="RHEA"/>
</dbReference>
<dbReference type="GO" id="GO:0106435">
    <property type="term" value="F:carboxylesterase activity"/>
    <property type="evidence" value="ECO:0007669"/>
    <property type="project" value="RHEA"/>
</dbReference>
<dbReference type="GO" id="GO:0034338">
    <property type="term" value="F:short-chain carboxylesterase activity"/>
    <property type="evidence" value="ECO:0000318"/>
    <property type="project" value="GO_Central"/>
</dbReference>
<dbReference type="FunFam" id="3.40.50.1820:FF:000089">
    <property type="entry name" value="Alpha/beta hydrolase"/>
    <property type="match status" value="1"/>
</dbReference>
<dbReference type="Gene3D" id="3.40.50.1820">
    <property type="entry name" value="alpha/beta hydrolase"/>
    <property type="match status" value="1"/>
</dbReference>
<dbReference type="InterPro" id="IPR013094">
    <property type="entry name" value="AB_hydrolase_3"/>
</dbReference>
<dbReference type="InterPro" id="IPR029058">
    <property type="entry name" value="AB_hydrolase_fold"/>
</dbReference>
<dbReference type="InterPro" id="IPR050300">
    <property type="entry name" value="GDXG_lipolytic_enzyme"/>
</dbReference>
<dbReference type="PANTHER" id="PTHR48081">
    <property type="entry name" value="AB HYDROLASE SUPERFAMILY PROTEIN C4A8.06C"/>
    <property type="match status" value="1"/>
</dbReference>
<dbReference type="PANTHER" id="PTHR48081:SF8">
    <property type="entry name" value="ALPHA_BETA HYDROLASE FOLD-3 DOMAIN-CONTAINING PROTEIN-RELATED"/>
    <property type="match status" value="1"/>
</dbReference>
<dbReference type="Pfam" id="PF07859">
    <property type="entry name" value="Abhydrolase_3"/>
    <property type="match status" value="1"/>
</dbReference>
<dbReference type="SUPFAM" id="SSF53474">
    <property type="entry name" value="alpha/beta-Hydrolases"/>
    <property type="match status" value="1"/>
</dbReference>
<sequence>MTKSLPGVADLRLGANHPRMWTRRVQGTVVNVGVKVLPWIPTPAKRILSAGRSVIIDGNTLDPTLQLMLSTSRIFGVDGLAVDDDIVASRAHMRAICEAMPGPQIHVDVTDLSIPGPAGEIPARHYRPSGGGATPLLVFYHGGGWTLGDLDTHDALCRLTCRDADIQVLSIDYRLAPEHPAPAAVEDAYAAFVWAHEHASDEFGALPGRVAVGGDSAGGNLSAVVCQLARDKARYEGGPTPVLQWLLYPRTDFTAQTRSMGLFGNGFLLTKRDIDWFHTQYLRDSDVDPADPRLSPLLAESLSGLAPALIAVAGFDPLRDEGESYAKALRAAGTAVDLRYLGSLTHGFLNLFQLGGGSAAGTNELISALRAHLSRV</sequence>
<keyword id="KW-0963">Cytoplasm</keyword>
<keyword id="KW-0378">Hydrolase</keyword>
<keyword id="KW-1185">Reference proteome</keyword>
<evidence type="ECO:0000269" key="1">
    <source>
    </source>
</evidence>
<evidence type="ECO:0000269" key="2">
    <source>
    </source>
</evidence>
<evidence type="ECO:0000305" key="3"/>
<evidence type="ECO:0000305" key="4">
    <source>
    </source>
</evidence>
<evidence type="ECO:0000312" key="5">
    <source>
        <dbReference type="EMBL" id="CCP45774.1"/>
    </source>
</evidence>
<evidence type="ECO:0007744" key="6">
    <source>
    </source>
</evidence>
<accession>P95125</accession>
<accession>F2GL39</accession>
<accession>I6Y254</accession>
<protein>
    <recommendedName>
        <fullName evidence="3">Carboxylic ester hydrolase LipN</fullName>
        <ecNumber evidence="1">3.1.1.-</ecNumber>
    </recommendedName>
</protein>
<reference key="1">
    <citation type="journal article" date="1998" name="Nature">
        <title>Deciphering the biology of Mycobacterium tuberculosis from the complete genome sequence.</title>
        <authorList>
            <person name="Cole S.T."/>
            <person name="Brosch R."/>
            <person name="Parkhill J."/>
            <person name="Garnier T."/>
            <person name="Churcher C.M."/>
            <person name="Harris D.E."/>
            <person name="Gordon S.V."/>
            <person name="Eiglmeier K."/>
            <person name="Gas S."/>
            <person name="Barry C.E. III"/>
            <person name="Tekaia F."/>
            <person name="Badcock K."/>
            <person name="Basham D."/>
            <person name="Brown D."/>
            <person name="Chillingworth T."/>
            <person name="Connor R."/>
            <person name="Davies R.M."/>
            <person name="Devlin K."/>
            <person name="Feltwell T."/>
            <person name="Gentles S."/>
            <person name="Hamlin N."/>
            <person name="Holroyd S."/>
            <person name="Hornsby T."/>
            <person name="Jagels K."/>
            <person name="Krogh A."/>
            <person name="McLean J."/>
            <person name="Moule S."/>
            <person name="Murphy L.D."/>
            <person name="Oliver S."/>
            <person name="Osborne J."/>
            <person name="Quail M.A."/>
            <person name="Rajandream M.A."/>
            <person name="Rogers J."/>
            <person name="Rutter S."/>
            <person name="Seeger K."/>
            <person name="Skelton S."/>
            <person name="Squares S."/>
            <person name="Squares R."/>
            <person name="Sulston J.E."/>
            <person name="Taylor K."/>
            <person name="Whitehead S."/>
            <person name="Barrell B.G."/>
        </authorList>
    </citation>
    <scope>NUCLEOTIDE SEQUENCE [LARGE SCALE GENOMIC DNA]</scope>
    <source>
        <strain>ATCC 25618 / H37Rv</strain>
    </source>
</reference>
<reference evidence="6" key="2">
    <citation type="journal article" date="2011" name="Mol. Cell. Proteomics">
        <title>Proteogenomic analysis of Mycobacterium tuberculosis by high resolution mass spectrometry.</title>
        <authorList>
            <person name="Kelkar D.S."/>
            <person name="Kumar D."/>
            <person name="Kumar P."/>
            <person name="Balakrishnan L."/>
            <person name="Muthusamy B."/>
            <person name="Yadav A.K."/>
            <person name="Shrivastava P."/>
            <person name="Marimuthu A."/>
            <person name="Anand S."/>
            <person name="Sundaram H."/>
            <person name="Kingsbury R."/>
            <person name="Harsha H.C."/>
            <person name="Nair B."/>
            <person name="Prasad T.S."/>
            <person name="Chauhan D.S."/>
            <person name="Katoch K."/>
            <person name="Katoch V.M."/>
            <person name="Kumar P."/>
            <person name="Chaerkady R."/>
            <person name="Ramachandran S."/>
            <person name="Dash D."/>
            <person name="Pandey A."/>
        </authorList>
    </citation>
    <scope>IDENTIFICATION BY MASS SPECTROMETRY [LARGE SCALE ANALYSIS]</scope>
</reference>
<reference key="3">
    <citation type="journal article" date="2016" name="J. Cell. Biochem.">
        <title>Characterization of LipN (Rv2970c) of Mycobacterium tuberculosis H37Rv and its probable role in xenobiotic degradation.</title>
        <authorList>
            <person name="Jadeja D."/>
            <person name="Dogra N."/>
            <person name="Arya S."/>
            <person name="Singh G."/>
            <person name="Singh G."/>
            <person name="Kaur J."/>
        </authorList>
    </citation>
    <scope>FUNCTION</scope>
    <scope>CATALYTIC ACTIVITY</scope>
    <scope>ACTIVITY REGULATION</scope>
    <scope>BIOPHYSICOCHEMICAL PROPERTIES</scope>
    <scope>SUBCELLULAR LOCATION</scope>
    <scope>INDUCTION</scope>
    <scope>MUTAGENESIS OF TRP-145; SER-216; ASP-316; ASP-320 AND HIS-346</scope>
    <scope>ACTIVE SITE</scope>
</reference>
<reference key="4">
    <citation type="journal article" date="2016" name="ACS Infect. Dis.">
        <title>Small-molecule probes reveal esterases with persistent activity in dormant and reactivating Mycobacterium tuberculosis.</title>
        <authorList>
            <person name="Tallman K.R."/>
            <person name="Levine S.R."/>
            <person name="Beatty K.E."/>
        </authorList>
    </citation>
    <scope>DEVELOPMENTAL STAGE</scope>
</reference>
<proteinExistence type="evidence at protein level"/>
<organism>
    <name type="scientific">Mycobacterium tuberculosis (strain ATCC 25618 / H37Rv)</name>
    <dbReference type="NCBI Taxonomy" id="83332"/>
    <lineage>
        <taxon>Bacteria</taxon>
        <taxon>Bacillati</taxon>
        <taxon>Actinomycetota</taxon>
        <taxon>Actinomycetes</taxon>
        <taxon>Mycobacteriales</taxon>
        <taxon>Mycobacteriaceae</taxon>
        <taxon>Mycobacterium</taxon>
        <taxon>Mycobacterium tuberculosis complex</taxon>
    </lineage>
</organism>
<gene>
    <name evidence="5" type="primary">lipN</name>
    <name evidence="5" type="ordered locus">Rv2970c</name>
</gene>
<name>LIPN_MYCTU</name>
<feature type="chain" id="PRO_0000448853" description="Carboxylic ester hydrolase LipN">
    <location>
        <begin position="1"/>
        <end position="376"/>
    </location>
</feature>
<feature type="active site" evidence="4">
    <location>
        <position position="216"/>
    </location>
</feature>
<feature type="active site" evidence="4">
    <location>
        <position position="316"/>
    </location>
</feature>
<feature type="active site" evidence="4">
    <location>
        <position position="346"/>
    </location>
</feature>
<feature type="mutagenesis site" description="Loss of activity." evidence="1">
    <original>W</original>
    <variation>A</variation>
    <location>
        <position position="145"/>
    </location>
</feature>
<feature type="mutagenesis site" description="Loss of activity." evidence="1">
    <original>S</original>
    <variation>A</variation>
    <location>
        <position position="216"/>
    </location>
</feature>
<feature type="mutagenesis site" description="Loss of activity." evidence="1">
    <original>D</original>
    <variation>A</variation>
    <location>
        <position position="316"/>
    </location>
</feature>
<feature type="mutagenesis site" description="No change in activity." evidence="1">
    <original>D</original>
    <variation>A</variation>
    <location>
        <position position="320"/>
    </location>
</feature>
<feature type="mutagenesis site" description="Loss of activity." evidence="1">
    <original>H</original>
    <variation>A</variation>
    <location>
        <position position="346"/>
    </location>
</feature>
<comment type="function">
    <text evidence="1">Non specific carboxylic ester hydrolase. Hydrolyzes various pNP-esters, with a preference for short carbon chain substrates. Can also hydrolyze tributyrin to di- and monobutyrin and 4-hydroxyphenylacetate to hydroquinone.</text>
</comment>
<comment type="catalytic activity">
    <reaction evidence="1">
        <text>a carboxylic ester + H2O = an alcohol + a carboxylate + H(+)</text>
        <dbReference type="Rhea" id="RHEA:21164"/>
        <dbReference type="ChEBI" id="CHEBI:15377"/>
        <dbReference type="ChEBI" id="CHEBI:15378"/>
        <dbReference type="ChEBI" id="CHEBI:29067"/>
        <dbReference type="ChEBI" id="CHEBI:30879"/>
        <dbReference type="ChEBI" id="CHEBI:33308"/>
    </reaction>
</comment>
<comment type="catalytic activity">
    <reaction evidence="1">
        <text>an acetyl ester + H2O = an aliphatic alcohol + acetate + H(+)</text>
        <dbReference type="Rhea" id="RHEA:12957"/>
        <dbReference type="ChEBI" id="CHEBI:2571"/>
        <dbReference type="ChEBI" id="CHEBI:15377"/>
        <dbReference type="ChEBI" id="CHEBI:15378"/>
        <dbReference type="ChEBI" id="CHEBI:30089"/>
        <dbReference type="ChEBI" id="CHEBI:47622"/>
    </reaction>
</comment>
<comment type="catalytic activity">
    <reaction evidence="1">
        <text>a butanoate ester + H2O = an aliphatic alcohol + butanoate + H(+)</text>
        <dbReference type="Rhea" id="RHEA:47348"/>
        <dbReference type="ChEBI" id="CHEBI:2571"/>
        <dbReference type="ChEBI" id="CHEBI:15377"/>
        <dbReference type="ChEBI" id="CHEBI:15378"/>
        <dbReference type="ChEBI" id="CHEBI:17968"/>
        <dbReference type="ChEBI" id="CHEBI:50477"/>
    </reaction>
</comment>
<comment type="catalytic activity">
    <reaction evidence="1">
        <text>an octanoate ester + H2O = an aliphatic alcohol + octanoate + H(+)</text>
        <dbReference type="Rhea" id="RHEA:47356"/>
        <dbReference type="ChEBI" id="CHEBI:2571"/>
        <dbReference type="ChEBI" id="CHEBI:15377"/>
        <dbReference type="ChEBI" id="CHEBI:15378"/>
        <dbReference type="ChEBI" id="CHEBI:25646"/>
        <dbReference type="ChEBI" id="CHEBI:87657"/>
    </reaction>
</comment>
<comment type="catalytic activity">
    <reaction evidence="1">
        <text>decanoate ester + H2O = decanoate + an aliphatic alcohol + H(+)</text>
        <dbReference type="Rhea" id="RHEA:47360"/>
        <dbReference type="ChEBI" id="CHEBI:2571"/>
        <dbReference type="ChEBI" id="CHEBI:15377"/>
        <dbReference type="ChEBI" id="CHEBI:15378"/>
        <dbReference type="ChEBI" id="CHEBI:27689"/>
        <dbReference type="ChEBI" id="CHEBI:87658"/>
    </reaction>
</comment>
<comment type="catalytic activity">
    <reaction evidence="1">
        <text>a dodecanoate ester + H2O = an aliphatic alcohol + dodecanoate + H(+)</text>
        <dbReference type="Rhea" id="RHEA:47364"/>
        <dbReference type="ChEBI" id="CHEBI:2571"/>
        <dbReference type="ChEBI" id="CHEBI:15377"/>
        <dbReference type="ChEBI" id="CHEBI:15378"/>
        <dbReference type="ChEBI" id="CHEBI:18262"/>
        <dbReference type="ChEBI" id="CHEBI:87659"/>
    </reaction>
</comment>
<comment type="catalytic activity">
    <reaction evidence="1">
        <text>1,2,3-tributanoylglycerol + H2O = dibutanoylglycerol + butanoate + H(+)</text>
        <dbReference type="Rhea" id="RHEA:40475"/>
        <dbReference type="ChEBI" id="CHEBI:15377"/>
        <dbReference type="ChEBI" id="CHEBI:15378"/>
        <dbReference type="ChEBI" id="CHEBI:17968"/>
        <dbReference type="ChEBI" id="CHEBI:35020"/>
        <dbReference type="ChEBI" id="CHEBI:76478"/>
    </reaction>
</comment>
<comment type="catalytic activity">
    <reaction evidence="1">
        <text>4-acetoxyphenol + H2O = hydroquinone + acetate + H(+)</text>
        <dbReference type="Rhea" id="RHEA:47384"/>
        <dbReference type="ChEBI" id="CHEBI:15377"/>
        <dbReference type="ChEBI" id="CHEBI:15378"/>
        <dbReference type="ChEBI" id="CHEBI:17594"/>
        <dbReference type="ChEBI" id="CHEBI:30089"/>
        <dbReference type="ChEBI" id="CHEBI:31128"/>
    </reaction>
</comment>
<comment type="activity regulation">
    <text evidence="1">Completely inhibited by tetrahydrolipstatin (THL), RHC-80267 and N-bromosuccinimide.</text>
</comment>
<comment type="biophysicochemical properties">
    <kinetics>
        <KM evidence="1">303 uM for pNP-butyrate</KM>
        <text evidence="1">kcat is 7283 min(-1) with pNP-butyrate as substrate.</text>
    </kinetics>
    <phDependence>
        <text evidence="1">Optimum pH is 8.0. Stable between pH 6.0-9.0 (with pNP-butyrate as substrate).</text>
    </phDependence>
    <temperatureDependence>
        <text evidence="1">Optimum temperature is 45 degrees Celsius (with pNP-butyrate as substrate).</text>
    </temperatureDependence>
</comment>
<comment type="subcellular location">
    <subcellularLocation>
        <location evidence="1">Cytoplasm</location>
    </subcellularLocation>
</comment>
<comment type="developmental stage">
    <text evidence="2">Remains active in dormant M.tuberculosis.</text>
</comment>
<comment type="induction">
    <text evidence="1">Expressed in macrophages after 6 hours of infection. In vitro, expressed only in acidic stress conditions.</text>
</comment>
<comment type="similarity">
    <text evidence="3">Belongs to the 'GDXG' lipolytic enzyme family.</text>
</comment>